<sequence length="281" mass="32162">MAGSPELVVLDPPWDKELAAGTESQALVSATPREDFRVRCTSKRAVTEMLQLCGRFVQKLGDALPEEIREPALRDAQWTFESAVQENISINGQAWQEASDNCFMDSDIKVLEDQFDEIIVDIATKRKQYPRKILECVIKTIKAKQEILKQYHPVVHPLDLKYDPDPAPHMENLKCRGETVAKEISEAMKSLPALIEQGEGFSQVLRMQPVIHLQRIHQEVFSSCHRKPDAKPENFITQIETTPTETASRKTSDMVLKRKQTKDCPQRKWYPLRPKKINLDT</sequence>
<reference key="1">
    <citation type="submission" date="1999-11" db="EMBL/GenBank/DDBJ databases">
        <title>Novel genes expressed in human dendritic cell.</title>
        <authorList>
            <person name="Li Y."/>
            <person name="Peng Y."/>
            <person name="Li N."/>
            <person name="Gu W."/>
            <person name="Han Z."/>
            <person name="Fu G."/>
            <person name="Chen Z."/>
        </authorList>
    </citation>
    <scope>NUCLEOTIDE SEQUENCE [LARGE SCALE MRNA] (ISOFORM 1)</scope>
    <source>
        <tissue>Dendritic cell</tissue>
    </source>
</reference>
<reference key="2">
    <citation type="submission" date="2000-04" db="EMBL/GenBank/DDBJ databases">
        <authorList>
            <person name="Xu X."/>
            <person name="Yang Y."/>
            <person name="Gao G."/>
            <person name="Xiao H."/>
            <person name="Chen Z."/>
            <person name="Han Z."/>
        </authorList>
    </citation>
    <scope>NUCLEOTIDE SEQUENCE [LARGE SCALE MRNA] (ISOFORM 1)</scope>
    <scope>VARIANT VAL-254</scope>
    <source>
        <tissue>Dendritic cell</tissue>
    </source>
</reference>
<reference key="3">
    <citation type="journal article" date="2006" name="Nature">
        <title>The DNA sequence and biological annotation of human chromosome 1.</title>
        <authorList>
            <person name="Gregory S.G."/>
            <person name="Barlow K.F."/>
            <person name="McLay K.E."/>
            <person name="Kaul R."/>
            <person name="Swarbreck D."/>
            <person name="Dunham A."/>
            <person name="Scott C.E."/>
            <person name="Howe K.L."/>
            <person name="Woodfine K."/>
            <person name="Spencer C.C.A."/>
            <person name="Jones M.C."/>
            <person name="Gillson C."/>
            <person name="Searle S."/>
            <person name="Zhou Y."/>
            <person name="Kokocinski F."/>
            <person name="McDonald L."/>
            <person name="Evans R."/>
            <person name="Phillips K."/>
            <person name="Atkinson A."/>
            <person name="Cooper R."/>
            <person name="Jones C."/>
            <person name="Hall R.E."/>
            <person name="Andrews T.D."/>
            <person name="Lloyd C."/>
            <person name="Ainscough R."/>
            <person name="Almeida J.P."/>
            <person name="Ambrose K.D."/>
            <person name="Anderson F."/>
            <person name="Andrew R.W."/>
            <person name="Ashwell R.I.S."/>
            <person name="Aubin K."/>
            <person name="Babbage A.K."/>
            <person name="Bagguley C.L."/>
            <person name="Bailey J."/>
            <person name="Beasley H."/>
            <person name="Bethel G."/>
            <person name="Bird C.P."/>
            <person name="Bray-Allen S."/>
            <person name="Brown J.Y."/>
            <person name="Brown A.J."/>
            <person name="Buckley D."/>
            <person name="Burton J."/>
            <person name="Bye J."/>
            <person name="Carder C."/>
            <person name="Chapman J.C."/>
            <person name="Clark S.Y."/>
            <person name="Clarke G."/>
            <person name="Clee C."/>
            <person name="Cobley V."/>
            <person name="Collier R.E."/>
            <person name="Corby N."/>
            <person name="Coville G.J."/>
            <person name="Davies J."/>
            <person name="Deadman R."/>
            <person name="Dunn M."/>
            <person name="Earthrowl M."/>
            <person name="Ellington A.G."/>
            <person name="Errington H."/>
            <person name="Frankish A."/>
            <person name="Frankland J."/>
            <person name="French L."/>
            <person name="Garner P."/>
            <person name="Garnett J."/>
            <person name="Gay L."/>
            <person name="Ghori M.R.J."/>
            <person name="Gibson R."/>
            <person name="Gilby L.M."/>
            <person name="Gillett W."/>
            <person name="Glithero R.J."/>
            <person name="Grafham D.V."/>
            <person name="Griffiths C."/>
            <person name="Griffiths-Jones S."/>
            <person name="Grocock R."/>
            <person name="Hammond S."/>
            <person name="Harrison E.S.I."/>
            <person name="Hart E."/>
            <person name="Haugen E."/>
            <person name="Heath P.D."/>
            <person name="Holmes S."/>
            <person name="Holt K."/>
            <person name="Howden P.J."/>
            <person name="Hunt A.R."/>
            <person name="Hunt S.E."/>
            <person name="Hunter G."/>
            <person name="Isherwood J."/>
            <person name="James R."/>
            <person name="Johnson C."/>
            <person name="Johnson D."/>
            <person name="Joy A."/>
            <person name="Kay M."/>
            <person name="Kershaw J.K."/>
            <person name="Kibukawa M."/>
            <person name="Kimberley A.M."/>
            <person name="King A."/>
            <person name="Knights A.J."/>
            <person name="Lad H."/>
            <person name="Laird G."/>
            <person name="Lawlor S."/>
            <person name="Leongamornlert D.A."/>
            <person name="Lloyd D.M."/>
            <person name="Loveland J."/>
            <person name="Lovell J."/>
            <person name="Lush M.J."/>
            <person name="Lyne R."/>
            <person name="Martin S."/>
            <person name="Mashreghi-Mohammadi M."/>
            <person name="Matthews L."/>
            <person name="Matthews N.S.W."/>
            <person name="McLaren S."/>
            <person name="Milne S."/>
            <person name="Mistry S."/>
            <person name="Moore M.J.F."/>
            <person name="Nickerson T."/>
            <person name="O'Dell C.N."/>
            <person name="Oliver K."/>
            <person name="Palmeiri A."/>
            <person name="Palmer S.A."/>
            <person name="Parker A."/>
            <person name="Patel D."/>
            <person name="Pearce A.V."/>
            <person name="Peck A.I."/>
            <person name="Pelan S."/>
            <person name="Phelps K."/>
            <person name="Phillimore B.J."/>
            <person name="Plumb R."/>
            <person name="Rajan J."/>
            <person name="Raymond C."/>
            <person name="Rouse G."/>
            <person name="Saenphimmachak C."/>
            <person name="Sehra H.K."/>
            <person name="Sheridan E."/>
            <person name="Shownkeen R."/>
            <person name="Sims S."/>
            <person name="Skuce C.D."/>
            <person name="Smith M."/>
            <person name="Steward C."/>
            <person name="Subramanian S."/>
            <person name="Sycamore N."/>
            <person name="Tracey A."/>
            <person name="Tromans A."/>
            <person name="Van Helmond Z."/>
            <person name="Wall M."/>
            <person name="Wallis J.M."/>
            <person name="White S."/>
            <person name="Whitehead S.L."/>
            <person name="Wilkinson J.E."/>
            <person name="Willey D.L."/>
            <person name="Williams H."/>
            <person name="Wilming L."/>
            <person name="Wray P.W."/>
            <person name="Wu Z."/>
            <person name="Coulson A."/>
            <person name="Vaudin M."/>
            <person name="Sulston J.E."/>
            <person name="Durbin R.M."/>
            <person name="Hubbard T."/>
            <person name="Wooster R."/>
            <person name="Dunham I."/>
            <person name="Carter N.P."/>
            <person name="McVean G."/>
            <person name="Ross M.T."/>
            <person name="Harrow J."/>
            <person name="Olson M.V."/>
            <person name="Beck S."/>
            <person name="Rogers J."/>
            <person name="Bentley D.R."/>
        </authorList>
    </citation>
    <scope>NUCLEOTIDE SEQUENCE [LARGE SCALE GENOMIC DNA]</scope>
</reference>
<reference key="4">
    <citation type="journal article" date="2004" name="Genome Res.">
        <title>The status, quality, and expansion of the NIH full-length cDNA project: the Mammalian Gene Collection (MGC).</title>
        <authorList>
            <consortium name="The MGC Project Team"/>
        </authorList>
    </citation>
    <scope>NUCLEOTIDE SEQUENCE [LARGE SCALE MRNA] (ISOFORM 1)</scope>
    <scope>VARIANTS PHE-4 AND VAL-254</scope>
    <source>
        <tissue>Urinary bladder</tissue>
    </source>
</reference>
<reference key="5">
    <citation type="journal article" date="2007" name="BMC Genomics">
        <title>The full-ORF clone resource of the German cDNA consortium.</title>
        <authorList>
            <person name="Bechtel S."/>
            <person name="Rosenfelder H."/>
            <person name="Duda A."/>
            <person name="Schmidt C.P."/>
            <person name="Ernst U."/>
            <person name="Wellenreuther R."/>
            <person name="Mehrle A."/>
            <person name="Schuster C."/>
            <person name="Bahr A."/>
            <person name="Bloecker H."/>
            <person name="Heubner D."/>
            <person name="Hoerlein A."/>
            <person name="Michel G."/>
            <person name="Wedler H."/>
            <person name="Koehrer K."/>
            <person name="Ottenwaelder B."/>
            <person name="Poustka A."/>
            <person name="Wiemann S."/>
            <person name="Schupp I."/>
        </authorList>
    </citation>
    <scope>NUCLEOTIDE SEQUENCE [LARGE SCALE MRNA] OF 64-281 (ISOFORM 1)</scope>
    <source>
        <tissue>Kidney</tissue>
    </source>
</reference>
<reference key="6">
    <citation type="journal article" date="2004" name="Nat. Cell Biol.">
        <title>A conserved Mis12 centromere complex is linked to heterochromatic HP1 and outer kinetochore protein Zwint-1.</title>
        <authorList>
            <person name="Obuse C."/>
            <person name="Iwasaki O."/>
            <person name="Kiyomitsu T."/>
            <person name="Goshima G."/>
            <person name="Toyoda Y."/>
            <person name="Yanagida M."/>
        </authorList>
    </citation>
    <scope>INTERACTION WITH DSN1 AND MIS12</scope>
    <scope>SUBCELLULAR LOCATION</scope>
</reference>
<reference key="7">
    <citation type="journal article" date="2006" name="J. Cell Biol.">
        <title>The human Mis12 complex is required for kinetochore assembly and proper chromosome segregation.</title>
        <authorList>
            <person name="Kline S.L."/>
            <person name="Cheeseman I.M."/>
            <person name="Hori T."/>
            <person name="Fukagawa T."/>
            <person name="Desai A."/>
        </authorList>
    </citation>
    <scope>FUNCTION</scope>
    <scope>COMPONENT OF MIS12 COMPLEX</scope>
    <scope>SUBCELLULAR LOCATION</scope>
</reference>
<reference key="8">
    <citation type="journal article" date="2007" name="Dev. Cell">
        <title>Human Blinkin/AF15q14 is required for chromosome alignment and the mitotic checkpoint through direct interaction with Bub1 and BubR1.</title>
        <authorList>
            <person name="Kiyomitsu T."/>
            <person name="Obuse C."/>
            <person name="Yanagida M."/>
        </authorList>
    </citation>
    <scope>INTERACTION WITH KNL1</scope>
</reference>
<reference key="9">
    <citation type="journal article" date="2007" name="Science">
        <title>ATM and ATR substrate analysis reveals extensive protein networks responsive to DNA damage.</title>
        <authorList>
            <person name="Matsuoka S."/>
            <person name="Ballif B.A."/>
            <person name="Smogorzewska A."/>
            <person name="McDonald E.R. III"/>
            <person name="Hurov K.E."/>
            <person name="Luo J."/>
            <person name="Bakalarski C.E."/>
            <person name="Zhao Z."/>
            <person name="Solimini N."/>
            <person name="Lerenthal Y."/>
            <person name="Shiloh Y."/>
            <person name="Gygi S.P."/>
            <person name="Elledge S.J."/>
        </authorList>
    </citation>
    <scope>IDENTIFICATION BY MASS SPECTROMETRY [LARGE SCALE ANALYSIS]</scope>
    <source>
        <tissue>Embryonic kidney</tissue>
    </source>
</reference>
<reference key="10">
    <citation type="journal article" date="2008" name="Proc. Natl. Acad. Sci. U.S.A.">
        <title>A quantitative atlas of mitotic phosphorylation.</title>
        <authorList>
            <person name="Dephoure N."/>
            <person name="Zhou C."/>
            <person name="Villen J."/>
            <person name="Beausoleil S.A."/>
            <person name="Bakalarski C.E."/>
            <person name="Elledge S.J."/>
            <person name="Gygi S.P."/>
        </authorList>
    </citation>
    <scope>PHOSPHORYLATION [LARGE SCALE ANALYSIS] AT THR-244</scope>
    <scope>IDENTIFICATION BY MASS SPECTROMETRY [LARGE SCALE ANALYSIS]</scope>
    <source>
        <tissue>Cervix carcinoma</tissue>
    </source>
</reference>
<reference key="11">
    <citation type="journal article" date="2009" name="Sci. Signal.">
        <title>Quantitative phosphoproteomic analysis of T cell receptor signaling reveals system-wide modulation of protein-protein interactions.</title>
        <authorList>
            <person name="Mayya V."/>
            <person name="Lundgren D.H."/>
            <person name="Hwang S.-I."/>
            <person name="Rezaul K."/>
            <person name="Wu L."/>
            <person name="Eng J.K."/>
            <person name="Rodionov V."/>
            <person name="Han D.K."/>
        </authorList>
    </citation>
    <scope>IDENTIFICATION BY MASS SPECTROMETRY [LARGE SCALE ANALYSIS]</scope>
    <source>
        <tissue>Leukemic T-cell</tissue>
    </source>
</reference>
<reference key="12">
    <citation type="journal article" date="2013" name="J. Proteome Res.">
        <title>Toward a comprehensive characterization of a human cancer cell phosphoproteome.</title>
        <authorList>
            <person name="Zhou H."/>
            <person name="Di Palma S."/>
            <person name="Preisinger C."/>
            <person name="Peng M."/>
            <person name="Polat A.N."/>
            <person name="Heck A.J."/>
            <person name="Mohammed S."/>
        </authorList>
    </citation>
    <scope>PHOSPHORYLATION [LARGE SCALE ANALYSIS] AT SER-4</scope>
    <scope>IDENTIFICATION BY MASS SPECTROMETRY [LARGE SCALE ANALYSIS]</scope>
    <source>
        <tissue>Cervix carcinoma</tissue>
        <tissue>Erythroleukemia</tissue>
    </source>
</reference>
<keyword id="KW-0002">3D-structure</keyword>
<keyword id="KW-0025">Alternative splicing</keyword>
<keyword id="KW-0131">Cell cycle</keyword>
<keyword id="KW-0132">Cell division</keyword>
<keyword id="KW-0137">Centromere</keyword>
<keyword id="KW-0158">Chromosome</keyword>
<keyword id="KW-0159">Chromosome partition</keyword>
<keyword id="KW-0995">Kinetochore</keyword>
<keyword id="KW-0498">Mitosis</keyword>
<keyword id="KW-0539">Nucleus</keyword>
<keyword id="KW-0597">Phosphoprotein</keyword>
<keyword id="KW-1267">Proteomics identification</keyword>
<keyword id="KW-1185">Reference proteome</keyword>
<name>NSL1_HUMAN</name>
<comment type="function">
    <text evidence="3">Part of the MIS12 complex which is required for normal chromosome alignment and segregation and kinetochore formation during mitosis.</text>
</comment>
<comment type="subunit">
    <text evidence="2 4">Component of the MIS12 complex composed of MIS12, DSN1, NSL1/DC8 and PMF1. Interacts with KNL1.</text>
</comment>
<comment type="interaction">
    <interactant intactId="EBI-2554690">
        <id>Q96IY1</id>
    </interactant>
    <interactant intactId="EBI-78219">
        <id>P45973</id>
        <label>CBX5</label>
    </interactant>
    <organismsDiffer>false</organismsDiffer>
    <experiments>6</experiments>
</comment>
<comment type="interaction">
    <interactant intactId="EBI-2554690">
        <id>Q96IY1</id>
    </interactant>
    <interactant intactId="EBI-1001144">
        <id>Q9H410</id>
        <label>DSN1</label>
    </interactant>
    <organismsDiffer>false</organismsDiffer>
    <experiments>28</experiments>
</comment>
<comment type="interaction">
    <interactant intactId="EBI-2554690">
        <id>Q96IY1</id>
    </interactant>
    <interactant intactId="EBI-752390">
        <id>Q9HB90</id>
        <label>RRAGC</label>
    </interactant>
    <organismsDiffer>false</organismsDiffer>
    <experiments>2</experiments>
</comment>
<comment type="interaction">
    <interactant intactId="EBI-2554690">
        <id>Q96IY1</id>
    </interactant>
    <interactant intactId="EBI-296151">
        <id>P37173</id>
        <label>TGFBR2</label>
    </interactant>
    <organismsDiffer>false</organismsDiffer>
    <experiments>3</experiments>
</comment>
<comment type="subcellular location">
    <subcellularLocation>
        <location evidence="2 3">Nucleus</location>
    </subcellularLocation>
    <subcellularLocation>
        <location evidence="2 3">Chromosome</location>
        <location evidence="2 3">Centromere</location>
        <location evidence="2 3">Kinetochore</location>
    </subcellularLocation>
    <text>Associated with the kinetochore (PubMed:15502821, PubMed:16585270).</text>
</comment>
<comment type="alternative products">
    <event type="alternative splicing"/>
    <isoform>
        <id>Q96IY1-1</id>
        <name>1</name>
        <sequence type="displayed"/>
    </isoform>
    <isoform>
        <id>Q96IY1-2</id>
        <name>2</name>
        <sequence type="described" ref="VSP_045741"/>
    </isoform>
</comment>
<comment type="sequence caution" evidence="6">
    <conflict type="frameshift">
        <sequence resource="EMBL-CDS" id="AAF86877"/>
    </conflict>
</comment>
<feature type="chain" id="PRO_0000089260" description="Kinetochore-associated protein NSL1 homolog">
    <location>
        <begin position="1"/>
        <end position="281"/>
    </location>
</feature>
<feature type="modified residue" description="Phosphoserine" evidence="8">
    <location>
        <position position="4"/>
    </location>
</feature>
<feature type="modified residue" description="Phosphothreonine" evidence="7">
    <location>
        <position position="244"/>
    </location>
</feature>
<feature type="splice variant" id="VSP_045741" description="In isoform 2." evidence="6">
    <original>APHMENLKCRGETVAKEISEAMKSLPALIEQGEGFSQVLRMQPVIHLQRIHQEVFSSCHRKPDAKPENFITQIETTPTETASRKTSDMVLKRKQTKDCPQRKWYPLRPKKINLDT</original>
    <variation>VLNGNAFNFSPFNMMLAVDLSYMVFITSSPSYGKFEMQRGNSSKGDQ</variation>
    <location>
        <begin position="167"/>
        <end position="281"/>
    </location>
</feature>
<feature type="sequence variant" id="VAR_051243" description="In dbSNP:rs17856201." evidence="1">
    <original>S</original>
    <variation>F</variation>
    <location>
        <position position="4"/>
    </location>
</feature>
<feature type="sequence variant" id="VAR_016005" description="In dbSNP:rs15702." evidence="1 5">
    <original>M</original>
    <variation>V</variation>
    <location>
        <position position="254"/>
    </location>
</feature>
<feature type="strand" evidence="10">
    <location>
        <begin position="37"/>
        <end position="41"/>
    </location>
</feature>
<feature type="helix" evidence="10">
    <location>
        <begin position="43"/>
        <end position="58"/>
    </location>
</feature>
<feature type="helix" evidence="10">
    <location>
        <begin position="59"/>
        <end position="63"/>
    </location>
</feature>
<feature type="turn" evidence="10">
    <location>
        <begin position="66"/>
        <end position="68"/>
    </location>
</feature>
<feature type="helix" evidence="10">
    <location>
        <begin position="69"/>
        <end position="85"/>
    </location>
</feature>
<feature type="strand" evidence="10">
    <location>
        <begin position="88"/>
        <end position="90"/>
    </location>
</feature>
<feature type="turn" evidence="11">
    <location>
        <begin position="95"/>
        <end position="97"/>
    </location>
</feature>
<feature type="helix" evidence="11">
    <location>
        <begin position="105"/>
        <end position="150"/>
    </location>
</feature>
<feature type="helix" evidence="11">
    <location>
        <begin position="167"/>
        <end position="212"/>
    </location>
</feature>
<feature type="helix" evidence="11">
    <location>
        <begin position="215"/>
        <end position="220"/>
    </location>
</feature>
<feature type="turn" evidence="9">
    <location>
        <begin position="267"/>
        <end position="269"/>
    </location>
</feature>
<gene>
    <name type="primary">NSL1</name>
    <name type="synonym">C1orf48</name>
    <name type="ORF">DC31</name>
    <name type="ORF">DC8</name>
    <name type="ORF">MIS14</name>
</gene>
<dbReference type="EMBL" id="AF201941">
    <property type="protein sequence ID" value="AAF86877.1"/>
    <property type="status" value="ALT_FRAME"/>
    <property type="molecule type" value="mRNA"/>
</dbReference>
<dbReference type="EMBL" id="AF255793">
    <property type="protein sequence ID" value="AAG44640.1"/>
    <property type="molecule type" value="mRNA"/>
</dbReference>
<dbReference type="EMBL" id="AC104333">
    <property type="status" value="NOT_ANNOTATED_CDS"/>
    <property type="molecule type" value="Genomic_DNA"/>
</dbReference>
<dbReference type="EMBL" id="AL591647">
    <property type="status" value="NOT_ANNOTATED_CDS"/>
    <property type="molecule type" value="Genomic_DNA"/>
</dbReference>
<dbReference type="EMBL" id="BC007067">
    <property type="protein sequence ID" value="AAH07067.1"/>
    <property type="molecule type" value="mRNA"/>
</dbReference>
<dbReference type="EMBL" id="AL050084">
    <property type="protein sequence ID" value="CAB43260.1"/>
    <property type="molecule type" value="mRNA"/>
</dbReference>
<dbReference type="CCDS" id="CCDS1509.1">
    <molecule id="Q96IY1-1"/>
</dbReference>
<dbReference type="CCDS" id="CCDS53474.1">
    <molecule id="Q96IY1-2"/>
</dbReference>
<dbReference type="PIR" id="T08737">
    <property type="entry name" value="T08737"/>
</dbReference>
<dbReference type="RefSeq" id="NP_001036014.1">
    <molecule id="Q96IY1-2"/>
    <property type="nucleotide sequence ID" value="NM_001042549.2"/>
</dbReference>
<dbReference type="RefSeq" id="NP_056286.3">
    <molecule id="Q96IY1-1"/>
    <property type="nucleotide sequence ID" value="NM_015471.3"/>
</dbReference>
<dbReference type="PDB" id="4NF9">
    <property type="method" value="X-ray"/>
    <property type="resolution" value="2.80 A"/>
    <property type="chains" value="C/D=256-281"/>
</dbReference>
<dbReference type="PDB" id="5LSI">
    <property type="method" value="X-ray"/>
    <property type="resolution" value="2.00 A"/>
    <property type="chains" value="E=29-99"/>
</dbReference>
<dbReference type="PDB" id="5LSJ">
    <property type="method" value="X-ray"/>
    <property type="resolution" value="3.25 A"/>
    <property type="chains" value="G/N=92-206"/>
</dbReference>
<dbReference type="PDB" id="5LSK">
    <property type="method" value="X-ray"/>
    <property type="resolution" value="3.50 A"/>
    <property type="chains" value="N=1-206"/>
</dbReference>
<dbReference type="PDB" id="8PPR">
    <property type="method" value="EM"/>
    <property type="resolution" value="3.00 A"/>
    <property type="chains" value="N=1-281"/>
</dbReference>
<dbReference type="PDB" id="8Q5H">
    <property type="method" value="EM"/>
    <property type="resolution" value="4.50 A"/>
    <property type="chains" value="N=1-281"/>
</dbReference>
<dbReference type="PDBsum" id="4NF9"/>
<dbReference type="PDBsum" id="5LSI"/>
<dbReference type="PDBsum" id="5LSJ"/>
<dbReference type="PDBsum" id="5LSK"/>
<dbReference type="PDBsum" id="8PPR"/>
<dbReference type="PDBsum" id="8Q5H"/>
<dbReference type="EMDB" id="EMD-17814"/>
<dbReference type="EMDB" id="EMD-18179"/>
<dbReference type="EMDB" id="EMD-2549"/>
<dbReference type="SMR" id="Q96IY1"/>
<dbReference type="BioGRID" id="117433">
    <property type="interactions" value="64"/>
</dbReference>
<dbReference type="ComplexPortal" id="CPX-5643">
    <property type="entry name" value="Kinetochore MIS12 complex"/>
</dbReference>
<dbReference type="CORUM" id="Q96IY1"/>
<dbReference type="FunCoup" id="Q96IY1">
    <property type="interactions" value="1346"/>
</dbReference>
<dbReference type="IntAct" id="Q96IY1">
    <property type="interactions" value="33"/>
</dbReference>
<dbReference type="MINT" id="Q96IY1"/>
<dbReference type="STRING" id="9606.ENSP00000355944"/>
<dbReference type="GlyGen" id="Q96IY1">
    <property type="glycosylation" value="1 site, 1 O-linked glycan (1 site)"/>
</dbReference>
<dbReference type="iPTMnet" id="Q96IY1"/>
<dbReference type="PhosphoSitePlus" id="Q96IY1"/>
<dbReference type="BioMuta" id="NSL1"/>
<dbReference type="DMDM" id="147744577"/>
<dbReference type="jPOST" id="Q96IY1"/>
<dbReference type="MassIVE" id="Q96IY1"/>
<dbReference type="PaxDb" id="9606-ENSP00000355944"/>
<dbReference type="PeptideAtlas" id="Q96IY1"/>
<dbReference type="ProteomicsDB" id="18182"/>
<dbReference type="ProteomicsDB" id="76867">
    <molecule id="Q96IY1-1"/>
</dbReference>
<dbReference type="Pumba" id="Q96IY1"/>
<dbReference type="Antibodypedia" id="34610">
    <property type="antibodies" value="100 antibodies from 21 providers"/>
</dbReference>
<dbReference type="DNASU" id="25936"/>
<dbReference type="Ensembl" id="ENST00000366977.8">
    <molecule id="Q96IY1-1"/>
    <property type="protein sequence ID" value="ENSP00000355944.3"/>
    <property type="gene ID" value="ENSG00000117697.15"/>
</dbReference>
<dbReference type="Ensembl" id="ENST00000626725.1">
    <molecule id="Q96IY1-2"/>
    <property type="protein sequence ID" value="ENSP00000486783.1"/>
    <property type="gene ID" value="ENSG00000117697.15"/>
</dbReference>
<dbReference type="GeneID" id="25936"/>
<dbReference type="KEGG" id="hsa:25936"/>
<dbReference type="MANE-Select" id="ENST00000366977.8">
    <property type="protein sequence ID" value="ENSP00000355944.3"/>
    <property type="RefSeq nucleotide sequence ID" value="NM_015471.4"/>
    <property type="RefSeq protein sequence ID" value="NP_056286.3"/>
</dbReference>
<dbReference type="UCSC" id="uc001hjn.4">
    <molecule id="Q96IY1-1"/>
    <property type="organism name" value="human"/>
</dbReference>
<dbReference type="AGR" id="HGNC:24548"/>
<dbReference type="CTD" id="25936"/>
<dbReference type="DisGeNET" id="25936"/>
<dbReference type="GeneCards" id="NSL1"/>
<dbReference type="HGNC" id="HGNC:24548">
    <property type="gene designation" value="NSL1"/>
</dbReference>
<dbReference type="HPA" id="ENSG00000117697">
    <property type="expression patterns" value="Low tissue specificity"/>
</dbReference>
<dbReference type="MIM" id="609174">
    <property type="type" value="gene"/>
</dbReference>
<dbReference type="neXtProt" id="NX_Q96IY1"/>
<dbReference type="OpenTargets" id="ENSG00000117697"/>
<dbReference type="PharmGKB" id="PA162398188"/>
<dbReference type="VEuPathDB" id="HostDB:ENSG00000117697"/>
<dbReference type="eggNOG" id="ENOG502S001">
    <property type="taxonomic scope" value="Eukaryota"/>
</dbReference>
<dbReference type="GeneTree" id="ENSGT00390000001374"/>
<dbReference type="HOGENOM" id="CLU_086065_0_0_1"/>
<dbReference type="InParanoid" id="Q96IY1"/>
<dbReference type="OMA" id="AWQETSD"/>
<dbReference type="OrthoDB" id="5973266at2759"/>
<dbReference type="PAN-GO" id="Q96IY1">
    <property type="GO annotations" value="2 GO annotations based on evolutionary models"/>
</dbReference>
<dbReference type="PhylomeDB" id="Q96IY1"/>
<dbReference type="TreeFam" id="TF333388"/>
<dbReference type="PathwayCommons" id="Q96IY1"/>
<dbReference type="Reactome" id="R-HSA-141444">
    <property type="pathway name" value="Amplification of signal from unattached kinetochores via a MAD2 inhibitory signal"/>
</dbReference>
<dbReference type="Reactome" id="R-HSA-2467813">
    <property type="pathway name" value="Separation of Sister Chromatids"/>
</dbReference>
<dbReference type="Reactome" id="R-HSA-2500257">
    <property type="pathway name" value="Resolution of Sister Chromatid Cohesion"/>
</dbReference>
<dbReference type="Reactome" id="R-HSA-5663220">
    <property type="pathway name" value="RHO GTPases Activate Formins"/>
</dbReference>
<dbReference type="Reactome" id="R-HSA-68877">
    <property type="pathway name" value="Mitotic Prometaphase"/>
</dbReference>
<dbReference type="Reactome" id="R-HSA-9648025">
    <property type="pathway name" value="EML4 and NUDC in mitotic spindle formation"/>
</dbReference>
<dbReference type="SignaLink" id="Q96IY1"/>
<dbReference type="SIGNOR" id="Q96IY1"/>
<dbReference type="BioGRID-ORCS" id="25936">
    <property type="hits" value="638 hits in 1171 CRISPR screens"/>
</dbReference>
<dbReference type="ChiTaRS" id="NSL1">
    <property type="organism name" value="human"/>
</dbReference>
<dbReference type="EvolutionaryTrace" id="Q96IY1"/>
<dbReference type="GeneWiki" id="NSL1"/>
<dbReference type="GenomeRNAi" id="25936"/>
<dbReference type="Pharos" id="Q96IY1">
    <property type="development level" value="Tbio"/>
</dbReference>
<dbReference type="PRO" id="PR:Q96IY1"/>
<dbReference type="Proteomes" id="UP000005640">
    <property type="component" value="Chromosome 1"/>
</dbReference>
<dbReference type="RNAct" id="Q96IY1">
    <property type="molecule type" value="protein"/>
</dbReference>
<dbReference type="Bgee" id="ENSG00000117697">
    <property type="expression patterns" value="Expressed in secondary oocyte and 211 other cell types or tissues"/>
</dbReference>
<dbReference type="ExpressionAtlas" id="Q96IY1">
    <property type="expression patterns" value="baseline and differential"/>
</dbReference>
<dbReference type="GO" id="GO:0005829">
    <property type="term" value="C:cytosol"/>
    <property type="evidence" value="ECO:0000304"/>
    <property type="project" value="Reactome"/>
</dbReference>
<dbReference type="GO" id="GO:0000776">
    <property type="term" value="C:kinetochore"/>
    <property type="evidence" value="ECO:0000314"/>
    <property type="project" value="WormBase"/>
</dbReference>
<dbReference type="GO" id="GO:0000444">
    <property type="term" value="C:MIS12/MIND type complex"/>
    <property type="evidence" value="ECO:0000314"/>
    <property type="project" value="UniProtKB"/>
</dbReference>
<dbReference type="GO" id="GO:0016607">
    <property type="term" value="C:nuclear speck"/>
    <property type="evidence" value="ECO:0000314"/>
    <property type="project" value="HPA"/>
</dbReference>
<dbReference type="GO" id="GO:0005634">
    <property type="term" value="C:nucleus"/>
    <property type="evidence" value="ECO:0000303"/>
    <property type="project" value="ComplexPortal"/>
</dbReference>
<dbReference type="GO" id="GO:0000940">
    <property type="term" value="C:outer kinetochore"/>
    <property type="evidence" value="ECO:0000314"/>
    <property type="project" value="UniProtKB"/>
</dbReference>
<dbReference type="GO" id="GO:0000922">
    <property type="term" value="C:spindle pole"/>
    <property type="evidence" value="ECO:0000303"/>
    <property type="project" value="ComplexPortal"/>
</dbReference>
<dbReference type="GO" id="GO:0008608">
    <property type="term" value="P:attachment of spindle microtubules to kinetochore"/>
    <property type="evidence" value="ECO:0000303"/>
    <property type="project" value="ComplexPortal"/>
</dbReference>
<dbReference type="GO" id="GO:0051301">
    <property type="term" value="P:cell division"/>
    <property type="evidence" value="ECO:0007669"/>
    <property type="project" value="UniProtKB-KW"/>
</dbReference>
<dbReference type="GO" id="GO:0000070">
    <property type="term" value="P:mitotic sister chromatid segregation"/>
    <property type="evidence" value="ECO:0007669"/>
    <property type="project" value="InterPro"/>
</dbReference>
<dbReference type="InterPro" id="IPR013950">
    <property type="entry name" value="Mis14/Nsl1"/>
</dbReference>
<dbReference type="PANTHER" id="PTHR31749">
    <property type="entry name" value="KINETOCHORE-ASSOCIATED PROTEIN NSL1 HOMOLOG"/>
    <property type="match status" value="1"/>
</dbReference>
<dbReference type="PANTHER" id="PTHR31749:SF3">
    <property type="entry name" value="KINETOCHORE-ASSOCIATED PROTEIN NSL1 HOMOLOG"/>
    <property type="match status" value="1"/>
</dbReference>
<dbReference type="Pfam" id="PF08641">
    <property type="entry name" value="Mis14"/>
    <property type="match status" value="1"/>
</dbReference>
<accession>Q96IY1</accession>
<accession>E7ETD5</accession>
<accession>Q5SY75</accession>
<accession>Q9H2M5</accession>
<accession>Q9NRN8</accession>
<accession>Q9Y415</accession>
<protein>
    <recommendedName>
        <fullName>Kinetochore-associated protein NSL1 homolog</fullName>
    </recommendedName>
</protein>
<evidence type="ECO:0000269" key="1">
    <source>
    </source>
</evidence>
<evidence type="ECO:0000269" key="2">
    <source>
    </source>
</evidence>
<evidence type="ECO:0000269" key="3">
    <source>
    </source>
</evidence>
<evidence type="ECO:0000269" key="4">
    <source>
    </source>
</evidence>
<evidence type="ECO:0000269" key="5">
    <source ref="2"/>
</evidence>
<evidence type="ECO:0000305" key="6"/>
<evidence type="ECO:0007744" key="7">
    <source>
    </source>
</evidence>
<evidence type="ECO:0007744" key="8">
    <source>
    </source>
</evidence>
<evidence type="ECO:0007829" key="9">
    <source>
        <dbReference type="PDB" id="4NF9"/>
    </source>
</evidence>
<evidence type="ECO:0007829" key="10">
    <source>
        <dbReference type="PDB" id="5LSI"/>
    </source>
</evidence>
<evidence type="ECO:0007829" key="11">
    <source>
        <dbReference type="PDB" id="8PPR"/>
    </source>
</evidence>
<proteinExistence type="evidence at protein level"/>
<organism>
    <name type="scientific">Homo sapiens</name>
    <name type="common">Human</name>
    <dbReference type="NCBI Taxonomy" id="9606"/>
    <lineage>
        <taxon>Eukaryota</taxon>
        <taxon>Metazoa</taxon>
        <taxon>Chordata</taxon>
        <taxon>Craniata</taxon>
        <taxon>Vertebrata</taxon>
        <taxon>Euteleostomi</taxon>
        <taxon>Mammalia</taxon>
        <taxon>Eutheria</taxon>
        <taxon>Euarchontoglires</taxon>
        <taxon>Primates</taxon>
        <taxon>Haplorrhini</taxon>
        <taxon>Catarrhini</taxon>
        <taxon>Hominidae</taxon>
        <taxon>Homo</taxon>
    </lineage>
</organism>